<sequence length="66" mass="7463">MPKLKNHSGSKKRFKFTASGLVKAQAAGKRHGMSKRPQKMKRNARGTFVMFKADGEKIAENFLRVK</sequence>
<feature type="chain" id="PRO_1000127399" description="Large ribosomal subunit protein bL35">
    <location>
        <begin position="1"/>
        <end position="66"/>
    </location>
</feature>
<feature type="region of interest" description="Disordered" evidence="2">
    <location>
        <begin position="25"/>
        <end position="45"/>
    </location>
</feature>
<feature type="compositionally biased region" description="Basic residues" evidence="2">
    <location>
        <begin position="28"/>
        <end position="44"/>
    </location>
</feature>
<name>RL35_RHOCS</name>
<comment type="similarity">
    <text evidence="1">Belongs to the bacterial ribosomal protein bL35 family.</text>
</comment>
<organism>
    <name type="scientific">Rhodospirillum centenum (strain ATCC 51521 / SW)</name>
    <dbReference type="NCBI Taxonomy" id="414684"/>
    <lineage>
        <taxon>Bacteria</taxon>
        <taxon>Pseudomonadati</taxon>
        <taxon>Pseudomonadota</taxon>
        <taxon>Alphaproteobacteria</taxon>
        <taxon>Rhodospirillales</taxon>
        <taxon>Rhodospirillaceae</taxon>
        <taxon>Rhodospirillum</taxon>
    </lineage>
</organism>
<evidence type="ECO:0000255" key="1">
    <source>
        <dbReference type="HAMAP-Rule" id="MF_00514"/>
    </source>
</evidence>
<evidence type="ECO:0000256" key="2">
    <source>
        <dbReference type="SAM" id="MobiDB-lite"/>
    </source>
</evidence>
<evidence type="ECO:0000305" key="3"/>
<dbReference type="EMBL" id="CP000613">
    <property type="protein sequence ID" value="ACI99699.1"/>
    <property type="molecule type" value="Genomic_DNA"/>
</dbReference>
<dbReference type="RefSeq" id="WP_012567484.1">
    <property type="nucleotide sequence ID" value="NC_011420.2"/>
</dbReference>
<dbReference type="SMR" id="B6IPJ7"/>
<dbReference type="STRING" id="414684.RC1_2312"/>
<dbReference type="KEGG" id="rce:RC1_2312"/>
<dbReference type="eggNOG" id="COG0291">
    <property type="taxonomic scope" value="Bacteria"/>
</dbReference>
<dbReference type="HOGENOM" id="CLU_169643_2_1_5"/>
<dbReference type="OrthoDB" id="9804851at2"/>
<dbReference type="Proteomes" id="UP000001591">
    <property type="component" value="Chromosome"/>
</dbReference>
<dbReference type="GO" id="GO:1990904">
    <property type="term" value="C:ribonucleoprotein complex"/>
    <property type="evidence" value="ECO:0007669"/>
    <property type="project" value="UniProtKB-KW"/>
</dbReference>
<dbReference type="GO" id="GO:0005840">
    <property type="term" value="C:ribosome"/>
    <property type="evidence" value="ECO:0007669"/>
    <property type="project" value="UniProtKB-KW"/>
</dbReference>
<dbReference type="GO" id="GO:0003735">
    <property type="term" value="F:structural constituent of ribosome"/>
    <property type="evidence" value="ECO:0007669"/>
    <property type="project" value="InterPro"/>
</dbReference>
<dbReference type="GO" id="GO:0006412">
    <property type="term" value="P:translation"/>
    <property type="evidence" value="ECO:0007669"/>
    <property type="project" value="UniProtKB-UniRule"/>
</dbReference>
<dbReference type="FunFam" id="4.10.410.60:FF:000001">
    <property type="entry name" value="50S ribosomal protein L35"/>
    <property type="match status" value="1"/>
</dbReference>
<dbReference type="Gene3D" id="4.10.410.60">
    <property type="match status" value="1"/>
</dbReference>
<dbReference type="HAMAP" id="MF_00514">
    <property type="entry name" value="Ribosomal_bL35"/>
    <property type="match status" value="1"/>
</dbReference>
<dbReference type="InterPro" id="IPR001706">
    <property type="entry name" value="Ribosomal_bL35"/>
</dbReference>
<dbReference type="InterPro" id="IPR021137">
    <property type="entry name" value="Ribosomal_bL35-like"/>
</dbReference>
<dbReference type="InterPro" id="IPR018265">
    <property type="entry name" value="Ribosomal_bL35_CS"/>
</dbReference>
<dbReference type="InterPro" id="IPR037229">
    <property type="entry name" value="Ribosomal_bL35_sf"/>
</dbReference>
<dbReference type="NCBIfam" id="TIGR00001">
    <property type="entry name" value="rpmI_bact"/>
    <property type="match status" value="1"/>
</dbReference>
<dbReference type="Pfam" id="PF01632">
    <property type="entry name" value="Ribosomal_L35p"/>
    <property type="match status" value="1"/>
</dbReference>
<dbReference type="PRINTS" id="PR00064">
    <property type="entry name" value="RIBOSOMALL35"/>
</dbReference>
<dbReference type="SUPFAM" id="SSF143034">
    <property type="entry name" value="L35p-like"/>
    <property type="match status" value="1"/>
</dbReference>
<dbReference type="PROSITE" id="PS00936">
    <property type="entry name" value="RIBOSOMAL_L35"/>
    <property type="match status" value="1"/>
</dbReference>
<accession>B6IPJ7</accession>
<reference key="1">
    <citation type="submission" date="2007-03" db="EMBL/GenBank/DDBJ databases">
        <title>Genome sequence of Rhodospirillum centenum.</title>
        <authorList>
            <person name="Touchman J.W."/>
            <person name="Bauer C."/>
            <person name="Blankenship R.E."/>
        </authorList>
    </citation>
    <scope>NUCLEOTIDE SEQUENCE [LARGE SCALE GENOMIC DNA]</scope>
    <source>
        <strain>ATCC 51521 / SW</strain>
    </source>
</reference>
<proteinExistence type="inferred from homology"/>
<keyword id="KW-1185">Reference proteome</keyword>
<keyword id="KW-0687">Ribonucleoprotein</keyword>
<keyword id="KW-0689">Ribosomal protein</keyword>
<protein>
    <recommendedName>
        <fullName evidence="1">Large ribosomal subunit protein bL35</fullName>
    </recommendedName>
    <alternativeName>
        <fullName evidence="3">50S ribosomal protein L35</fullName>
    </alternativeName>
</protein>
<gene>
    <name evidence="1" type="primary">rpmI</name>
    <name type="ordered locus">RC1_2312</name>
</gene>